<proteinExistence type="inferred from homology"/>
<reference key="1">
    <citation type="journal article" date="1999" name="Mol. Gen. Genet.">
        <title>The tryptophan biosynthesis gene cluster trpCDEGFBA from Pyrococcus kodakaraensis KOD1 is regulated at the transcriptional level and expressed as a single mRNA.</title>
        <authorList>
            <person name="Tang X."/>
            <person name="Ezaki S."/>
            <person name="Fujiwara S."/>
            <person name="Takagi M."/>
            <person name="Atomi H."/>
            <person name="Imanaka T."/>
        </authorList>
    </citation>
    <scope>NUCLEOTIDE SEQUENCE [GENOMIC DNA]</scope>
    <source>
        <strain>ATCC BAA-918 / JCM 12380 / KOD1</strain>
    </source>
</reference>
<reference key="2">
    <citation type="journal article" date="2005" name="Genome Res.">
        <title>Complete genome sequence of the hyperthermophilic archaeon Thermococcus kodakaraensis KOD1 and comparison with Pyrococcus genomes.</title>
        <authorList>
            <person name="Fukui T."/>
            <person name="Atomi H."/>
            <person name="Kanai T."/>
            <person name="Matsumi R."/>
            <person name="Fujiwara S."/>
            <person name="Imanaka T."/>
        </authorList>
    </citation>
    <scope>NUCLEOTIDE SEQUENCE [LARGE SCALE GENOMIC DNA]</scope>
    <source>
        <strain>ATCC BAA-918 / JCM 12380 / KOD1</strain>
    </source>
</reference>
<feature type="chain" id="PRO_0000098898" description="Tryptophan synthase alpha chain">
    <location>
        <begin position="1"/>
        <end position="251"/>
    </location>
</feature>
<feature type="active site" description="Proton acceptor" evidence="1">
    <location>
        <position position="36"/>
    </location>
</feature>
<feature type="active site" description="Proton acceptor" evidence="1">
    <location>
        <position position="47"/>
    </location>
</feature>
<dbReference type="EC" id="4.2.1.20" evidence="1"/>
<dbReference type="EMBL" id="AB030011">
    <property type="protein sequence ID" value="BAA82551.1"/>
    <property type="molecule type" value="Genomic_DNA"/>
</dbReference>
<dbReference type="EMBL" id="AP006878">
    <property type="protein sequence ID" value="BAD84447.1"/>
    <property type="molecule type" value="Genomic_DNA"/>
</dbReference>
<dbReference type="PIR" id="T43928">
    <property type="entry name" value="T43928"/>
</dbReference>
<dbReference type="RefSeq" id="WP_011249213.1">
    <property type="nucleotide sequence ID" value="NC_006624.1"/>
</dbReference>
<dbReference type="SMR" id="Q9YGA9"/>
<dbReference type="FunCoup" id="Q9YGA9">
    <property type="interactions" value="72"/>
</dbReference>
<dbReference type="IntAct" id="Q9YGA9">
    <property type="interactions" value="1"/>
</dbReference>
<dbReference type="MINT" id="Q9YGA9"/>
<dbReference type="STRING" id="69014.TK0258"/>
<dbReference type="EnsemblBacteria" id="BAD84447">
    <property type="protein sequence ID" value="BAD84447"/>
    <property type="gene ID" value="TK0258"/>
</dbReference>
<dbReference type="GeneID" id="78446761"/>
<dbReference type="KEGG" id="tko:TK0258"/>
<dbReference type="PATRIC" id="fig|69014.16.peg.257"/>
<dbReference type="eggNOG" id="arCOG01086">
    <property type="taxonomic scope" value="Archaea"/>
</dbReference>
<dbReference type="HOGENOM" id="CLU_016734_0_2_2"/>
<dbReference type="InParanoid" id="Q9YGA9"/>
<dbReference type="OrthoDB" id="25658at2157"/>
<dbReference type="PhylomeDB" id="Q9YGA9"/>
<dbReference type="BioCyc" id="MetaCyc:MONOMER-3561"/>
<dbReference type="BRENDA" id="4.2.1.20">
    <property type="organism ID" value="5246"/>
</dbReference>
<dbReference type="UniPathway" id="UPA00035">
    <property type="reaction ID" value="UER00044"/>
</dbReference>
<dbReference type="Proteomes" id="UP000000536">
    <property type="component" value="Chromosome"/>
</dbReference>
<dbReference type="GO" id="GO:0005829">
    <property type="term" value="C:cytosol"/>
    <property type="evidence" value="ECO:0000318"/>
    <property type="project" value="GO_Central"/>
</dbReference>
<dbReference type="GO" id="GO:0004834">
    <property type="term" value="F:tryptophan synthase activity"/>
    <property type="evidence" value="ECO:0000318"/>
    <property type="project" value="GO_Central"/>
</dbReference>
<dbReference type="GO" id="GO:0000162">
    <property type="term" value="P:L-tryptophan biosynthetic process"/>
    <property type="evidence" value="ECO:0000318"/>
    <property type="project" value="GO_Central"/>
</dbReference>
<dbReference type="CDD" id="cd04724">
    <property type="entry name" value="Tryptophan_synthase_alpha"/>
    <property type="match status" value="1"/>
</dbReference>
<dbReference type="FunFam" id="3.20.20.70:FF:000037">
    <property type="entry name" value="Tryptophan synthase alpha chain"/>
    <property type="match status" value="1"/>
</dbReference>
<dbReference type="Gene3D" id="3.20.20.70">
    <property type="entry name" value="Aldolase class I"/>
    <property type="match status" value="1"/>
</dbReference>
<dbReference type="HAMAP" id="MF_00131">
    <property type="entry name" value="Trp_synth_alpha"/>
    <property type="match status" value="1"/>
</dbReference>
<dbReference type="InterPro" id="IPR013785">
    <property type="entry name" value="Aldolase_TIM"/>
</dbReference>
<dbReference type="InterPro" id="IPR011060">
    <property type="entry name" value="RibuloseP-bd_barrel"/>
</dbReference>
<dbReference type="InterPro" id="IPR018204">
    <property type="entry name" value="Trp_synthase_alpha_AS"/>
</dbReference>
<dbReference type="InterPro" id="IPR002028">
    <property type="entry name" value="Trp_synthase_suA"/>
</dbReference>
<dbReference type="NCBIfam" id="TIGR00262">
    <property type="entry name" value="trpA"/>
    <property type="match status" value="1"/>
</dbReference>
<dbReference type="PANTHER" id="PTHR43406:SF1">
    <property type="entry name" value="TRYPTOPHAN SYNTHASE ALPHA CHAIN, CHLOROPLASTIC"/>
    <property type="match status" value="1"/>
</dbReference>
<dbReference type="PANTHER" id="PTHR43406">
    <property type="entry name" value="TRYPTOPHAN SYNTHASE, ALPHA CHAIN"/>
    <property type="match status" value="1"/>
</dbReference>
<dbReference type="Pfam" id="PF00290">
    <property type="entry name" value="Trp_syntA"/>
    <property type="match status" value="1"/>
</dbReference>
<dbReference type="SUPFAM" id="SSF51366">
    <property type="entry name" value="Ribulose-phoshate binding barrel"/>
    <property type="match status" value="1"/>
</dbReference>
<dbReference type="PROSITE" id="PS00167">
    <property type="entry name" value="TRP_SYNTHASE_ALPHA"/>
    <property type="match status" value="1"/>
</dbReference>
<evidence type="ECO:0000255" key="1">
    <source>
        <dbReference type="HAMAP-Rule" id="MF_00131"/>
    </source>
</evidence>
<sequence length="251" mass="27747">MFEKGSLIPYLTAGDPSVEKTLEFLLAVEEFAGLIELGIPFSDPMADGKTIQESHYRALRNGFKLDDTFRILREFRRHSSTPVILMTYYNPVFRTGVKKFLGEAKASGADGILVVDLPVSHAGEFLDAAKEEGLKTVFLAAPNTPDERLREIDKASTGFVYLISLYGTTGARDRLPETAFEFVRRARKICNNKLAVGFGVSRREQVEELLKAGADGVVVGSALIELISRSENPVEELRRKVAELSGYSRAL</sequence>
<gene>
    <name evidence="1" type="primary">trpA</name>
    <name type="ordered locus">TK0258</name>
</gene>
<comment type="function">
    <text evidence="1">The alpha subunit is responsible for the aldol cleavage of indoleglycerol phosphate to indole and glyceraldehyde 3-phosphate.</text>
</comment>
<comment type="catalytic activity">
    <reaction evidence="1">
        <text>(1S,2R)-1-C-(indol-3-yl)glycerol 3-phosphate + L-serine = D-glyceraldehyde 3-phosphate + L-tryptophan + H2O</text>
        <dbReference type="Rhea" id="RHEA:10532"/>
        <dbReference type="ChEBI" id="CHEBI:15377"/>
        <dbReference type="ChEBI" id="CHEBI:33384"/>
        <dbReference type="ChEBI" id="CHEBI:57912"/>
        <dbReference type="ChEBI" id="CHEBI:58866"/>
        <dbReference type="ChEBI" id="CHEBI:59776"/>
        <dbReference type="EC" id="4.2.1.20"/>
    </reaction>
</comment>
<comment type="pathway">
    <text evidence="1">Amino-acid biosynthesis; L-tryptophan biosynthesis; L-tryptophan from chorismate: step 5/5.</text>
</comment>
<comment type="subunit">
    <text evidence="1">Tetramer of two alpha and two beta chains.</text>
</comment>
<comment type="similarity">
    <text evidence="1">Belongs to the TrpA family.</text>
</comment>
<keyword id="KW-0028">Amino-acid biosynthesis</keyword>
<keyword id="KW-0057">Aromatic amino acid biosynthesis</keyword>
<keyword id="KW-0456">Lyase</keyword>
<keyword id="KW-1185">Reference proteome</keyword>
<keyword id="KW-0822">Tryptophan biosynthesis</keyword>
<organism>
    <name type="scientific">Thermococcus kodakarensis (strain ATCC BAA-918 / JCM 12380 / KOD1)</name>
    <name type="common">Pyrococcus kodakaraensis (strain KOD1)</name>
    <dbReference type="NCBI Taxonomy" id="69014"/>
    <lineage>
        <taxon>Archaea</taxon>
        <taxon>Methanobacteriati</taxon>
        <taxon>Methanobacteriota</taxon>
        <taxon>Thermococci</taxon>
        <taxon>Thermococcales</taxon>
        <taxon>Thermococcaceae</taxon>
        <taxon>Thermococcus</taxon>
    </lineage>
</organism>
<name>TRPA_THEKO</name>
<accession>Q9YGA9</accession>
<protein>
    <recommendedName>
        <fullName evidence="1">Tryptophan synthase alpha chain</fullName>
        <ecNumber evidence="1">4.2.1.20</ecNumber>
    </recommendedName>
</protein>